<reference key="1">
    <citation type="submission" date="2006-06" db="EMBL/GenBank/DDBJ databases">
        <title>Complete sequence of chromosome of Mycobacterium sp. MCS.</title>
        <authorList>
            <consortium name="US DOE Joint Genome Institute"/>
            <person name="Copeland A."/>
            <person name="Lucas S."/>
            <person name="Lapidus A."/>
            <person name="Barry K."/>
            <person name="Detter J.C."/>
            <person name="Glavina del Rio T."/>
            <person name="Hammon N."/>
            <person name="Israni S."/>
            <person name="Dalin E."/>
            <person name="Tice H."/>
            <person name="Pitluck S."/>
            <person name="Martinez M."/>
            <person name="Schmutz J."/>
            <person name="Larimer F."/>
            <person name="Land M."/>
            <person name="Hauser L."/>
            <person name="Kyrpides N."/>
            <person name="Kim E."/>
            <person name="Miller C.D."/>
            <person name="Hughes J.E."/>
            <person name="Anderson A.J."/>
            <person name="Sims R.C."/>
            <person name="Richardson P."/>
        </authorList>
    </citation>
    <scope>NUCLEOTIDE SEQUENCE [LARGE SCALE GENOMIC DNA]</scope>
    <source>
        <strain>MCS</strain>
    </source>
</reference>
<accession>Q1BE01</accession>
<sequence length="230" mass="24907">MSRATLDKNPHEVASMFDAVARRYDLTNTVLSLGQDRFWRRETCAALGIGPGDRVLDLAAGTAVSTVELAASGAWCVAADFSVGMLSAGRQRDVPKVAGDATRLPFADESFDAVTISFGLRNVVDHVAGLEEMARVTRPGGRLVVCEFSTPTNRAFATLYKEYLMKALPRMARAVASNPDAYVYLAESIRAWPDQAGLARRIEAAGWSQVRWRNLTGGIVALHAAVKPPR</sequence>
<proteinExistence type="inferred from homology"/>
<feature type="chain" id="PRO_1000056261" description="Demethylmenaquinone methyltransferase">
    <location>
        <begin position="1"/>
        <end position="230"/>
    </location>
</feature>
<feature type="binding site" evidence="1">
    <location>
        <position position="62"/>
    </location>
    <ligand>
        <name>S-adenosyl-L-methionine</name>
        <dbReference type="ChEBI" id="CHEBI:59789"/>
    </ligand>
</feature>
<feature type="binding site" evidence="1">
    <location>
        <position position="80"/>
    </location>
    <ligand>
        <name>S-adenosyl-L-methionine</name>
        <dbReference type="ChEBI" id="CHEBI:59789"/>
    </ligand>
</feature>
<feature type="binding site" evidence="1">
    <location>
        <begin position="100"/>
        <end position="101"/>
    </location>
    <ligand>
        <name>S-adenosyl-L-methionine</name>
        <dbReference type="ChEBI" id="CHEBI:59789"/>
    </ligand>
</feature>
<feature type="binding site" evidence="1">
    <location>
        <position position="117"/>
    </location>
    <ligand>
        <name>S-adenosyl-L-methionine</name>
        <dbReference type="ChEBI" id="CHEBI:59789"/>
    </ligand>
</feature>
<name>MENG_MYCSS</name>
<gene>
    <name evidence="1" type="primary">menG</name>
    <name type="ordered locus">Mmcs_0763</name>
</gene>
<keyword id="KW-0474">Menaquinone biosynthesis</keyword>
<keyword id="KW-0489">Methyltransferase</keyword>
<keyword id="KW-0949">S-adenosyl-L-methionine</keyword>
<keyword id="KW-0808">Transferase</keyword>
<protein>
    <recommendedName>
        <fullName evidence="1">Demethylmenaquinone methyltransferase</fullName>
        <ecNumber evidence="1">2.1.1.163</ecNumber>
    </recommendedName>
</protein>
<dbReference type="EC" id="2.1.1.163" evidence="1"/>
<dbReference type="EMBL" id="CP000384">
    <property type="protein sequence ID" value="ABG06883.1"/>
    <property type="molecule type" value="Genomic_DNA"/>
</dbReference>
<dbReference type="SMR" id="Q1BE01"/>
<dbReference type="KEGG" id="mmc:Mmcs_0763"/>
<dbReference type="HOGENOM" id="CLU_037990_0_0_11"/>
<dbReference type="BioCyc" id="MSP164756:G1G6O-778-MONOMER"/>
<dbReference type="UniPathway" id="UPA00079">
    <property type="reaction ID" value="UER00169"/>
</dbReference>
<dbReference type="GO" id="GO:0043770">
    <property type="term" value="F:demethylmenaquinone methyltransferase activity"/>
    <property type="evidence" value="ECO:0007669"/>
    <property type="project" value="UniProtKB-UniRule"/>
</dbReference>
<dbReference type="GO" id="GO:0009234">
    <property type="term" value="P:menaquinone biosynthetic process"/>
    <property type="evidence" value="ECO:0007669"/>
    <property type="project" value="UniProtKB-UniRule"/>
</dbReference>
<dbReference type="GO" id="GO:0032259">
    <property type="term" value="P:methylation"/>
    <property type="evidence" value="ECO:0007669"/>
    <property type="project" value="UniProtKB-KW"/>
</dbReference>
<dbReference type="CDD" id="cd02440">
    <property type="entry name" value="AdoMet_MTases"/>
    <property type="match status" value="1"/>
</dbReference>
<dbReference type="Gene3D" id="3.40.50.150">
    <property type="entry name" value="Vaccinia Virus protein VP39"/>
    <property type="match status" value="1"/>
</dbReference>
<dbReference type="HAMAP" id="MF_01813">
    <property type="entry name" value="MenG_UbiE_methyltr"/>
    <property type="match status" value="1"/>
</dbReference>
<dbReference type="InterPro" id="IPR029063">
    <property type="entry name" value="SAM-dependent_MTases_sf"/>
</dbReference>
<dbReference type="InterPro" id="IPR004033">
    <property type="entry name" value="UbiE/COQ5_MeTrFase"/>
</dbReference>
<dbReference type="InterPro" id="IPR023576">
    <property type="entry name" value="UbiE/COQ5_MeTrFase_CS"/>
</dbReference>
<dbReference type="NCBIfam" id="TIGR01934">
    <property type="entry name" value="MenG_MenH_UbiE"/>
    <property type="match status" value="1"/>
</dbReference>
<dbReference type="NCBIfam" id="NF001241">
    <property type="entry name" value="PRK00216.1-2"/>
    <property type="match status" value="1"/>
</dbReference>
<dbReference type="PANTHER" id="PTHR43591:SF24">
    <property type="entry name" value="2-METHOXY-6-POLYPRENYL-1,4-BENZOQUINOL METHYLASE, MITOCHONDRIAL"/>
    <property type="match status" value="1"/>
</dbReference>
<dbReference type="PANTHER" id="PTHR43591">
    <property type="entry name" value="METHYLTRANSFERASE"/>
    <property type="match status" value="1"/>
</dbReference>
<dbReference type="Pfam" id="PF01209">
    <property type="entry name" value="Ubie_methyltran"/>
    <property type="match status" value="1"/>
</dbReference>
<dbReference type="SUPFAM" id="SSF53335">
    <property type="entry name" value="S-adenosyl-L-methionine-dependent methyltransferases"/>
    <property type="match status" value="1"/>
</dbReference>
<dbReference type="PROSITE" id="PS51608">
    <property type="entry name" value="SAM_MT_UBIE"/>
    <property type="match status" value="1"/>
</dbReference>
<dbReference type="PROSITE" id="PS01183">
    <property type="entry name" value="UBIE_1"/>
    <property type="match status" value="1"/>
</dbReference>
<dbReference type="PROSITE" id="PS01184">
    <property type="entry name" value="UBIE_2"/>
    <property type="match status" value="1"/>
</dbReference>
<organism>
    <name type="scientific">Mycobacterium sp. (strain MCS)</name>
    <dbReference type="NCBI Taxonomy" id="164756"/>
    <lineage>
        <taxon>Bacteria</taxon>
        <taxon>Bacillati</taxon>
        <taxon>Actinomycetota</taxon>
        <taxon>Actinomycetes</taxon>
        <taxon>Mycobacteriales</taxon>
        <taxon>Mycobacteriaceae</taxon>
        <taxon>Mycobacterium</taxon>
    </lineage>
</organism>
<comment type="function">
    <text evidence="1">Methyltransferase required for the conversion of demethylmenaquinol (DMKH2) to menaquinol (MKH2).</text>
</comment>
<comment type="catalytic activity">
    <reaction evidence="1">
        <text>a 2-demethylmenaquinol + S-adenosyl-L-methionine = a menaquinol + S-adenosyl-L-homocysteine + H(+)</text>
        <dbReference type="Rhea" id="RHEA:42640"/>
        <dbReference type="Rhea" id="RHEA-COMP:9539"/>
        <dbReference type="Rhea" id="RHEA-COMP:9563"/>
        <dbReference type="ChEBI" id="CHEBI:15378"/>
        <dbReference type="ChEBI" id="CHEBI:18151"/>
        <dbReference type="ChEBI" id="CHEBI:55437"/>
        <dbReference type="ChEBI" id="CHEBI:57856"/>
        <dbReference type="ChEBI" id="CHEBI:59789"/>
        <dbReference type="EC" id="2.1.1.163"/>
    </reaction>
</comment>
<comment type="pathway">
    <text evidence="1">Quinol/quinone metabolism; menaquinone biosynthesis; menaquinol from 1,4-dihydroxy-2-naphthoate: step 2/2.</text>
</comment>
<comment type="similarity">
    <text evidence="1">Belongs to the class I-like SAM-binding methyltransferase superfamily. MenG/UbiE family.</text>
</comment>
<evidence type="ECO:0000255" key="1">
    <source>
        <dbReference type="HAMAP-Rule" id="MF_01813"/>
    </source>
</evidence>